<dbReference type="EC" id="2.7.7.18" evidence="1"/>
<dbReference type="EMBL" id="CP001108">
    <property type="protein sequence ID" value="ACF47241.1"/>
    <property type="molecule type" value="Genomic_DNA"/>
</dbReference>
<dbReference type="RefSeq" id="WP_012506771.1">
    <property type="nucleotide sequence ID" value="NC_011059.1"/>
</dbReference>
<dbReference type="SMR" id="B4S6D9"/>
<dbReference type="STRING" id="290512.Paes_2239"/>
<dbReference type="KEGG" id="paa:Paes_2239"/>
<dbReference type="eggNOG" id="COG1057">
    <property type="taxonomic scope" value="Bacteria"/>
</dbReference>
<dbReference type="HOGENOM" id="CLU_069765_3_2_10"/>
<dbReference type="UniPathway" id="UPA00253">
    <property type="reaction ID" value="UER00332"/>
</dbReference>
<dbReference type="Proteomes" id="UP000002725">
    <property type="component" value="Chromosome"/>
</dbReference>
<dbReference type="GO" id="GO:0005524">
    <property type="term" value="F:ATP binding"/>
    <property type="evidence" value="ECO:0007669"/>
    <property type="project" value="UniProtKB-KW"/>
</dbReference>
<dbReference type="GO" id="GO:0004515">
    <property type="term" value="F:nicotinate-nucleotide adenylyltransferase activity"/>
    <property type="evidence" value="ECO:0007669"/>
    <property type="project" value="UniProtKB-UniRule"/>
</dbReference>
<dbReference type="GO" id="GO:0009435">
    <property type="term" value="P:NAD biosynthetic process"/>
    <property type="evidence" value="ECO:0007669"/>
    <property type="project" value="UniProtKB-UniRule"/>
</dbReference>
<dbReference type="CDD" id="cd02165">
    <property type="entry name" value="NMNAT"/>
    <property type="match status" value="1"/>
</dbReference>
<dbReference type="Gene3D" id="3.40.50.620">
    <property type="entry name" value="HUPs"/>
    <property type="match status" value="1"/>
</dbReference>
<dbReference type="HAMAP" id="MF_00244">
    <property type="entry name" value="NaMN_adenylyltr"/>
    <property type="match status" value="1"/>
</dbReference>
<dbReference type="InterPro" id="IPR004821">
    <property type="entry name" value="Cyt_trans-like"/>
</dbReference>
<dbReference type="InterPro" id="IPR005248">
    <property type="entry name" value="NadD/NMNAT"/>
</dbReference>
<dbReference type="InterPro" id="IPR014729">
    <property type="entry name" value="Rossmann-like_a/b/a_fold"/>
</dbReference>
<dbReference type="NCBIfam" id="TIGR00125">
    <property type="entry name" value="cyt_tran_rel"/>
    <property type="match status" value="1"/>
</dbReference>
<dbReference type="NCBIfam" id="TIGR00482">
    <property type="entry name" value="nicotinate (nicotinamide) nucleotide adenylyltransferase"/>
    <property type="match status" value="1"/>
</dbReference>
<dbReference type="PANTHER" id="PTHR39321">
    <property type="entry name" value="NICOTINATE-NUCLEOTIDE ADENYLYLTRANSFERASE-RELATED"/>
    <property type="match status" value="1"/>
</dbReference>
<dbReference type="PANTHER" id="PTHR39321:SF3">
    <property type="entry name" value="PHOSPHOPANTETHEINE ADENYLYLTRANSFERASE"/>
    <property type="match status" value="1"/>
</dbReference>
<dbReference type="Pfam" id="PF01467">
    <property type="entry name" value="CTP_transf_like"/>
    <property type="match status" value="1"/>
</dbReference>
<dbReference type="SUPFAM" id="SSF52374">
    <property type="entry name" value="Nucleotidylyl transferase"/>
    <property type="match status" value="1"/>
</dbReference>
<accession>B4S6D9</accession>
<protein>
    <recommendedName>
        <fullName evidence="1">Probable nicotinate-nucleotide adenylyltransferase</fullName>
        <ecNumber evidence="1">2.7.7.18</ecNumber>
    </recommendedName>
    <alternativeName>
        <fullName evidence="1">Deamido-NAD(+) diphosphorylase</fullName>
    </alternativeName>
    <alternativeName>
        <fullName evidence="1">Deamido-NAD(+) pyrophosphorylase</fullName>
    </alternativeName>
    <alternativeName>
        <fullName evidence="1">Nicotinate mononucleotide adenylyltransferase</fullName>
        <shortName evidence="1">NaMN adenylyltransferase</shortName>
    </alternativeName>
</protein>
<proteinExistence type="inferred from homology"/>
<feature type="chain" id="PRO_1000100788" description="Probable nicotinate-nucleotide adenylyltransferase">
    <location>
        <begin position="1"/>
        <end position="203"/>
    </location>
</feature>
<reference key="1">
    <citation type="submission" date="2008-06" db="EMBL/GenBank/DDBJ databases">
        <title>Complete sequence of chromosome of Prosthecochloris aestuarii DSM 271.</title>
        <authorList>
            <consortium name="US DOE Joint Genome Institute"/>
            <person name="Lucas S."/>
            <person name="Copeland A."/>
            <person name="Lapidus A."/>
            <person name="Glavina del Rio T."/>
            <person name="Dalin E."/>
            <person name="Tice H."/>
            <person name="Bruce D."/>
            <person name="Goodwin L."/>
            <person name="Pitluck S."/>
            <person name="Schmutz J."/>
            <person name="Larimer F."/>
            <person name="Land M."/>
            <person name="Hauser L."/>
            <person name="Kyrpides N."/>
            <person name="Anderson I."/>
            <person name="Liu Z."/>
            <person name="Li T."/>
            <person name="Zhao F."/>
            <person name="Overmann J."/>
            <person name="Bryant D.A."/>
            <person name="Richardson P."/>
        </authorList>
    </citation>
    <scope>NUCLEOTIDE SEQUENCE [LARGE SCALE GENOMIC DNA]</scope>
    <source>
        <strain>DSM 271 / SK 413</strain>
    </source>
</reference>
<organism>
    <name type="scientific">Prosthecochloris aestuarii (strain DSM 271 / SK 413)</name>
    <dbReference type="NCBI Taxonomy" id="290512"/>
    <lineage>
        <taxon>Bacteria</taxon>
        <taxon>Pseudomonadati</taxon>
        <taxon>Chlorobiota</taxon>
        <taxon>Chlorobiia</taxon>
        <taxon>Chlorobiales</taxon>
        <taxon>Chlorobiaceae</taxon>
        <taxon>Prosthecochloris</taxon>
    </lineage>
</organism>
<name>NADD_PROA2</name>
<keyword id="KW-0067">ATP-binding</keyword>
<keyword id="KW-0520">NAD</keyword>
<keyword id="KW-0547">Nucleotide-binding</keyword>
<keyword id="KW-0548">Nucleotidyltransferase</keyword>
<keyword id="KW-0662">Pyridine nucleotide biosynthesis</keyword>
<keyword id="KW-0808">Transferase</keyword>
<gene>
    <name evidence="1" type="primary">nadD</name>
    <name type="ordered locus">Paes_2239</name>
</gene>
<sequence length="203" mass="23119">MRLALFGGSFDPPHNAHLALCLCARELLDIDKLIISVSNNPLKENRSASNAHRLAMAELLVSEINATGRIAEVSRWELERSGPSYTIDLLTRIGQLYPEEPVTLLIGEDNFRGFRQWKSWQEILERCYVVVFRRPLEHAAFDDAYAHLPGIPDRHQVRFIDFDFQLSSTAIRYAIATGEPYAHLVPPSIADYIASRHLYSERS</sequence>
<comment type="function">
    <text evidence="1">Catalyzes the reversible adenylation of nicotinate mononucleotide (NaMN) to nicotinic acid adenine dinucleotide (NaAD).</text>
</comment>
<comment type="catalytic activity">
    <reaction evidence="1">
        <text>nicotinate beta-D-ribonucleotide + ATP + H(+) = deamido-NAD(+) + diphosphate</text>
        <dbReference type="Rhea" id="RHEA:22860"/>
        <dbReference type="ChEBI" id="CHEBI:15378"/>
        <dbReference type="ChEBI" id="CHEBI:30616"/>
        <dbReference type="ChEBI" id="CHEBI:33019"/>
        <dbReference type="ChEBI" id="CHEBI:57502"/>
        <dbReference type="ChEBI" id="CHEBI:58437"/>
        <dbReference type="EC" id="2.7.7.18"/>
    </reaction>
</comment>
<comment type="pathway">
    <text evidence="1">Cofactor biosynthesis; NAD(+) biosynthesis; deamido-NAD(+) from nicotinate D-ribonucleotide: step 1/1.</text>
</comment>
<comment type="similarity">
    <text evidence="1">Belongs to the NadD family.</text>
</comment>
<evidence type="ECO:0000255" key="1">
    <source>
        <dbReference type="HAMAP-Rule" id="MF_00244"/>
    </source>
</evidence>